<feature type="initiator methionine" description="Removed" evidence="5">
    <location>
        <position position="1"/>
    </location>
</feature>
<feature type="chain" id="PRO_0000211524" description="Golgi-associated plant pathogenesis-related protein 1">
    <location>
        <begin position="2"/>
        <end position="154"/>
    </location>
</feature>
<feature type="domain" description="SCP">
    <location>
        <begin position="14"/>
        <end position="132"/>
    </location>
</feature>
<feature type="region of interest" description="Disordered" evidence="2">
    <location>
        <begin position="1"/>
        <end position="21"/>
    </location>
</feature>
<feature type="region of interest" description="Interaction with CAV1" evidence="3">
    <location>
        <begin position="91"/>
        <end position="98"/>
    </location>
</feature>
<feature type="coiled-coil region" evidence="1">
    <location>
        <begin position="30"/>
        <end position="53"/>
    </location>
</feature>
<feature type="compositionally biased region" description="Basic and acidic residues" evidence="2">
    <location>
        <begin position="9"/>
        <end position="21"/>
    </location>
</feature>
<feature type="lipid moiety-binding region" description="N-myristoyl glycine" evidence="3 5">
    <location>
        <position position="2"/>
    </location>
</feature>
<feature type="sequence conflict" description="In Ref. 1; AA sequence." evidence="6" ref="1">
    <original>R</original>
    <variation>Q</variation>
    <location>
        <position position="37"/>
    </location>
</feature>
<feature type="sequence conflict" description="In Ref. 5; AAH17918." evidence="6" ref="5">
    <original>IKNY</original>
    <variation>VHFM</variation>
    <location>
        <begin position="87"/>
        <end position="90"/>
    </location>
</feature>
<feature type="sequence conflict" description="In Ref. 3; BAC11019." evidence="6" ref="3">
    <original>TGHFTAMVWKNTKKMGVGKASASDGSSFVVARYFPAGNVVNEGFFEENVLPPKK</original>
    <variation>IRFFFFNFLLFLSKPLLYFSYF</variation>
    <location>
        <begin position="101"/>
        <end position="154"/>
    </location>
</feature>
<feature type="helix" evidence="7">
    <location>
        <begin position="5"/>
        <end position="23"/>
    </location>
</feature>
<feature type="helix" evidence="7">
    <location>
        <begin position="33"/>
        <end position="49"/>
    </location>
</feature>
<feature type="helix" evidence="7">
    <location>
        <begin position="57"/>
        <end position="59"/>
    </location>
</feature>
<feature type="strand" evidence="7">
    <location>
        <begin position="64"/>
        <end position="72"/>
    </location>
</feature>
<feature type="helix" evidence="7">
    <location>
        <begin position="76"/>
        <end position="84"/>
    </location>
</feature>
<feature type="helix" evidence="7">
    <location>
        <begin position="85"/>
        <end position="89"/>
    </location>
</feature>
<feature type="helix" evidence="7">
    <location>
        <begin position="99"/>
        <end position="101"/>
    </location>
</feature>
<feature type="helix" evidence="7">
    <location>
        <begin position="102"/>
        <end position="108"/>
    </location>
</feature>
<feature type="strand" evidence="7">
    <location>
        <begin position="114"/>
        <end position="121"/>
    </location>
</feature>
<feature type="strand" evidence="7">
    <location>
        <begin position="127"/>
        <end position="135"/>
    </location>
</feature>
<feature type="helix" evidence="7">
    <location>
        <begin position="144"/>
        <end position="148"/>
    </location>
</feature>
<gene>
    <name type="primary">GLIPR2</name>
    <name type="synonym">C9orf19</name>
    <name type="synonym">GAPR1</name>
</gene>
<proteinExistence type="evidence at protein level"/>
<dbReference type="EMBL" id="AJ011129">
    <property type="protein sequence ID" value="CAC12812.1"/>
    <property type="molecule type" value="mRNA"/>
</dbReference>
<dbReference type="EMBL" id="AY039756">
    <property type="protein sequence ID" value="AAK83460.1"/>
    <property type="molecule type" value="mRNA"/>
</dbReference>
<dbReference type="EMBL" id="AK074488">
    <property type="protein sequence ID" value="BAC11019.1"/>
    <property type="molecule type" value="mRNA"/>
</dbReference>
<dbReference type="EMBL" id="AK075091">
    <property type="protein sequence ID" value="BAC11395.1"/>
    <property type="molecule type" value="mRNA"/>
</dbReference>
<dbReference type="EMBL" id="AL158830">
    <property type="status" value="NOT_ANNOTATED_CDS"/>
    <property type="molecule type" value="Genomic_DNA"/>
</dbReference>
<dbReference type="EMBL" id="BC017918">
    <property type="protein sequence ID" value="AAH17918.1"/>
    <property type="molecule type" value="mRNA"/>
</dbReference>
<dbReference type="CCDS" id="CCDS6598.1"/>
<dbReference type="RefSeq" id="NP_071738.1">
    <property type="nucleotide sequence ID" value="NM_022343.4"/>
</dbReference>
<dbReference type="PDB" id="1SMB">
    <property type="method" value="X-ray"/>
    <property type="resolution" value="1.55 A"/>
    <property type="chains" value="A=1-154"/>
</dbReference>
<dbReference type="PDB" id="4AIW">
    <property type="method" value="X-ray"/>
    <property type="resolution" value="1.50 A"/>
    <property type="chains" value="A=1-154"/>
</dbReference>
<dbReference type="PDB" id="5VHG">
    <property type="method" value="X-ray"/>
    <property type="resolution" value="1.27 A"/>
    <property type="chains" value="A=4-153"/>
</dbReference>
<dbReference type="PDBsum" id="1SMB"/>
<dbReference type="PDBsum" id="4AIW"/>
<dbReference type="PDBsum" id="5VHG"/>
<dbReference type="SMR" id="Q9H4G4"/>
<dbReference type="BioGRID" id="127417">
    <property type="interactions" value="21"/>
</dbReference>
<dbReference type="DIP" id="DIP-60127N"/>
<dbReference type="FunCoup" id="Q9H4G4">
    <property type="interactions" value="384"/>
</dbReference>
<dbReference type="IntAct" id="Q9H4G4">
    <property type="interactions" value="9"/>
</dbReference>
<dbReference type="MINT" id="Q9H4G4"/>
<dbReference type="STRING" id="9606.ENSP00000367196"/>
<dbReference type="DrugBank" id="DB03661">
    <property type="generic name" value="L-cysteic acid"/>
</dbReference>
<dbReference type="GlyGen" id="Q9H4G4">
    <property type="glycosylation" value="1 site, 1 O-linked glycan (1 site)"/>
</dbReference>
<dbReference type="iPTMnet" id="Q9H4G4"/>
<dbReference type="PhosphoSitePlus" id="Q9H4G4"/>
<dbReference type="SwissPalm" id="Q9H4G4"/>
<dbReference type="BioMuta" id="GLIPR2"/>
<dbReference type="jPOST" id="Q9H4G4"/>
<dbReference type="MassIVE" id="Q9H4G4"/>
<dbReference type="PaxDb" id="9606-ENSP00000367196"/>
<dbReference type="PeptideAtlas" id="Q9H4G4"/>
<dbReference type="ProteomicsDB" id="80836"/>
<dbReference type="Pumba" id="Q9H4G4"/>
<dbReference type="TopDownProteomics" id="Q9H4G4"/>
<dbReference type="Antibodypedia" id="26141">
    <property type="antibodies" value="159 antibodies from 18 providers"/>
</dbReference>
<dbReference type="DNASU" id="152007"/>
<dbReference type="Ensembl" id="ENST00000377960.9">
    <property type="protein sequence ID" value="ENSP00000367196.4"/>
    <property type="gene ID" value="ENSG00000122694.16"/>
</dbReference>
<dbReference type="GeneID" id="152007"/>
<dbReference type="KEGG" id="hsa:152007"/>
<dbReference type="MANE-Select" id="ENST00000377960.9">
    <property type="protein sequence ID" value="ENSP00000367196.4"/>
    <property type="RefSeq nucleotide sequence ID" value="NM_022343.4"/>
    <property type="RefSeq protein sequence ID" value="NP_071738.1"/>
</dbReference>
<dbReference type="UCSC" id="uc003zyz.5">
    <property type="organism name" value="human"/>
</dbReference>
<dbReference type="AGR" id="HGNC:18007"/>
<dbReference type="CTD" id="152007"/>
<dbReference type="DisGeNET" id="152007"/>
<dbReference type="GeneCards" id="GLIPR2"/>
<dbReference type="HGNC" id="HGNC:18007">
    <property type="gene designation" value="GLIPR2"/>
</dbReference>
<dbReference type="HPA" id="ENSG00000122694">
    <property type="expression patterns" value="Low tissue specificity"/>
</dbReference>
<dbReference type="MIM" id="607141">
    <property type="type" value="gene"/>
</dbReference>
<dbReference type="neXtProt" id="NX_Q9H4G4"/>
<dbReference type="OpenTargets" id="ENSG00000122694"/>
<dbReference type="PharmGKB" id="PA164720283"/>
<dbReference type="VEuPathDB" id="HostDB:ENSG00000122694"/>
<dbReference type="eggNOG" id="KOG3017">
    <property type="taxonomic scope" value="Eukaryota"/>
</dbReference>
<dbReference type="GeneTree" id="ENSGT00390000020276"/>
<dbReference type="InParanoid" id="Q9H4G4"/>
<dbReference type="OMA" id="NPGHYEQ"/>
<dbReference type="OrthoDB" id="337038at2759"/>
<dbReference type="PAN-GO" id="Q9H4G4">
    <property type="GO annotations" value="1 GO annotation based on evolutionary models"/>
</dbReference>
<dbReference type="PhylomeDB" id="Q9H4G4"/>
<dbReference type="TreeFam" id="TF313138"/>
<dbReference type="PathwayCommons" id="Q9H4G4"/>
<dbReference type="SignaLink" id="Q9H4G4"/>
<dbReference type="SIGNOR" id="Q9H4G4"/>
<dbReference type="BioGRID-ORCS" id="152007">
    <property type="hits" value="9 hits in 1161 CRISPR screens"/>
</dbReference>
<dbReference type="CD-CODE" id="FB4E32DD">
    <property type="entry name" value="Presynaptic clusters and postsynaptic densities"/>
</dbReference>
<dbReference type="ChiTaRS" id="GLIPR2">
    <property type="organism name" value="human"/>
</dbReference>
<dbReference type="EvolutionaryTrace" id="Q9H4G4"/>
<dbReference type="GenomeRNAi" id="152007"/>
<dbReference type="Pharos" id="Q9H4G4">
    <property type="development level" value="Tbio"/>
</dbReference>
<dbReference type="PRO" id="PR:Q9H4G4"/>
<dbReference type="Proteomes" id="UP000005640">
    <property type="component" value="Chromosome 9"/>
</dbReference>
<dbReference type="RNAct" id="Q9H4G4">
    <property type="molecule type" value="protein"/>
</dbReference>
<dbReference type="Bgee" id="ENSG00000122694">
    <property type="expression patterns" value="Expressed in monocyte and 183 other cell types or tissues"/>
</dbReference>
<dbReference type="ExpressionAtlas" id="Q9H4G4">
    <property type="expression patterns" value="baseline and differential"/>
</dbReference>
<dbReference type="GO" id="GO:0070062">
    <property type="term" value="C:extracellular exosome"/>
    <property type="evidence" value="ECO:0007005"/>
    <property type="project" value="UniProtKB"/>
</dbReference>
<dbReference type="GO" id="GO:0005615">
    <property type="term" value="C:extracellular space"/>
    <property type="evidence" value="ECO:0000318"/>
    <property type="project" value="GO_Central"/>
</dbReference>
<dbReference type="GO" id="GO:0000139">
    <property type="term" value="C:Golgi membrane"/>
    <property type="evidence" value="ECO:0000314"/>
    <property type="project" value="UniProtKB"/>
</dbReference>
<dbReference type="GO" id="GO:0042803">
    <property type="term" value="F:protein homodimerization activity"/>
    <property type="evidence" value="ECO:0000314"/>
    <property type="project" value="UniProtKB"/>
</dbReference>
<dbReference type="GO" id="GO:0010634">
    <property type="term" value="P:positive regulation of epithelial cell migration"/>
    <property type="evidence" value="ECO:0000314"/>
    <property type="project" value="UniProtKB"/>
</dbReference>
<dbReference type="GO" id="GO:0010718">
    <property type="term" value="P:positive regulation of epithelial to mesenchymal transition"/>
    <property type="evidence" value="ECO:0000314"/>
    <property type="project" value="UniProtKB"/>
</dbReference>
<dbReference type="GO" id="GO:0070374">
    <property type="term" value="P:positive regulation of ERK1 and ERK2 cascade"/>
    <property type="evidence" value="ECO:0000314"/>
    <property type="project" value="UniProtKB"/>
</dbReference>
<dbReference type="GO" id="GO:0019953">
    <property type="term" value="P:sexual reproduction"/>
    <property type="evidence" value="ECO:0000318"/>
    <property type="project" value="GO_Central"/>
</dbReference>
<dbReference type="CDD" id="cd05382">
    <property type="entry name" value="CAP_GAPR1-like"/>
    <property type="match status" value="1"/>
</dbReference>
<dbReference type="FunFam" id="3.40.33.10:FF:000015">
    <property type="entry name" value="Golgi-associated plant pathogenesis-related protein 1"/>
    <property type="match status" value="1"/>
</dbReference>
<dbReference type="Gene3D" id="3.40.33.10">
    <property type="entry name" value="CAP"/>
    <property type="match status" value="1"/>
</dbReference>
<dbReference type="InterPro" id="IPR018244">
    <property type="entry name" value="Allrgn_V5/Tpx1_CS"/>
</dbReference>
<dbReference type="InterPro" id="IPR014044">
    <property type="entry name" value="CAP_dom"/>
</dbReference>
<dbReference type="InterPro" id="IPR035940">
    <property type="entry name" value="CAP_sf"/>
</dbReference>
<dbReference type="InterPro" id="IPR001283">
    <property type="entry name" value="CRISP-related"/>
</dbReference>
<dbReference type="InterPro" id="IPR034113">
    <property type="entry name" value="SCP_GAPR1-like"/>
</dbReference>
<dbReference type="PANTHER" id="PTHR10334">
    <property type="entry name" value="CYSTEINE-RICH SECRETORY PROTEIN-RELATED"/>
    <property type="match status" value="1"/>
</dbReference>
<dbReference type="Pfam" id="PF00188">
    <property type="entry name" value="CAP"/>
    <property type="match status" value="1"/>
</dbReference>
<dbReference type="PRINTS" id="PR00837">
    <property type="entry name" value="V5TPXLIKE"/>
</dbReference>
<dbReference type="SMART" id="SM00198">
    <property type="entry name" value="SCP"/>
    <property type="match status" value="1"/>
</dbReference>
<dbReference type="SUPFAM" id="SSF55797">
    <property type="entry name" value="PR-1-like"/>
    <property type="match status" value="1"/>
</dbReference>
<dbReference type="PROSITE" id="PS01009">
    <property type="entry name" value="CRISP_1"/>
    <property type="match status" value="1"/>
</dbReference>
<comment type="subunit">
    <text evidence="3">Homodimer. Interacts with CAV1.</text>
</comment>
<comment type="subcellular location">
    <subcellularLocation>
        <location evidence="3">Golgi apparatus membrane</location>
        <topology evidence="3">Lipid-anchor</topology>
    </subcellularLocation>
    <text>Binds lipid-enriched microdomains of Golgi membranes not only by ionic interactions but also through the myristate.</text>
</comment>
<comment type="tissue specificity">
    <text evidence="4">Highest expression in lung and peripheral leukocytes, and minor expression in liver and kidney.</text>
</comment>
<comment type="similarity">
    <text evidence="6">Belongs to the CRISP family.</text>
</comment>
<organism>
    <name type="scientific">Homo sapiens</name>
    <name type="common">Human</name>
    <dbReference type="NCBI Taxonomy" id="9606"/>
    <lineage>
        <taxon>Eukaryota</taxon>
        <taxon>Metazoa</taxon>
        <taxon>Chordata</taxon>
        <taxon>Craniata</taxon>
        <taxon>Vertebrata</taxon>
        <taxon>Euteleostomi</taxon>
        <taxon>Mammalia</taxon>
        <taxon>Eutheria</taxon>
        <taxon>Euarchontoglires</taxon>
        <taxon>Primates</taxon>
        <taxon>Haplorrhini</taxon>
        <taxon>Catarrhini</taxon>
        <taxon>Hominidae</taxon>
        <taxon>Homo</taxon>
    </lineage>
</organism>
<reference key="1">
    <citation type="journal article" date="2002" name="J. Cell Sci.">
        <title>Identification and characterization of a novel human plant pathogenesis-related protein that localizes to lipid-enriched microdomains in the Golgi complex.</title>
        <authorList>
            <person name="Eberle H.B."/>
            <person name="Serrano R.L."/>
            <person name="Fuellekrug J."/>
            <person name="Schlosser A."/>
            <person name="Lehmann W.D."/>
            <person name="Lottspeich F."/>
            <person name="Kaloyanova D."/>
            <person name="Wieland F.T."/>
            <person name="Helms J.B."/>
        </authorList>
    </citation>
    <scope>NUCLEOTIDE SEQUENCE [MRNA]</scope>
    <scope>PROTEIN SEQUENCE OF 35-49 AND 54-68</scope>
    <scope>SUBCELLULAR LOCATION</scope>
    <scope>MYRISTOYLATION AT GLY-2</scope>
    <scope>INTERACTION WITH CAV1</scope>
    <source>
        <tissue>Brain</tissue>
    </source>
</reference>
<reference key="2">
    <citation type="journal article" date="2002" name="Gene">
        <title>Cloning and characterization of a human novel gene C9orf19 encoding a conserved putative protein with an SCP-like extracellular protein domain.</title>
        <authorList>
            <person name="Eisenberg I."/>
            <person name="Barash M."/>
            <person name="Kahan T."/>
            <person name="Mitrani-Rosenbaum S."/>
        </authorList>
    </citation>
    <scope>NUCLEOTIDE SEQUENCE [MRNA]</scope>
    <scope>TISSUE SPECIFICITY</scope>
    <source>
        <tissue>Placenta</tissue>
    </source>
</reference>
<reference key="3">
    <citation type="journal article" date="2004" name="Nat. Genet.">
        <title>Complete sequencing and characterization of 21,243 full-length human cDNAs.</title>
        <authorList>
            <person name="Ota T."/>
            <person name="Suzuki Y."/>
            <person name="Nishikawa T."/>
            <person name="Otsuki T."/>
            <person name="Sugiyama T."/>
            <person name="Irie R."/>
            <person name="Wakamatsu A."/>
            <person name="Hayashi K."/>
            <person name="Sato H."/>
            <person name="Nagai K."/>
            <person name="Kimura K."/>
            <person name="Makita H."/>
            <person name="Sekine M."/>
            <person name="Obayashi M."/>
            <person name="Nishi T."/>
            <person name="Shibahara T."/>
            <person name="Tanaka T."/>
            <person name="Ishii S."/>
            <person name="Yamamoto J."/>
            <person name="Saito K."/>
            <person name="Kawai Y."/>
            <person name="Isono Y."/>
            <person name="Nakamura Y."/>
            <person name="Nagahari K."/>
            <person name="Murakami K."/>
            <person name="Yasuda T."/>
            <person name="Iwayanagi T."/>
            <person name="Wagatsuma M."/>
            <person name="Shiratori A."/>
            <person name="Sudo H."/>
            <person name="Hosoiri T."/>
            <person name="Kaku Y."/>
            <person name="Kodaira H."/>
            <person name="Kondo H."/>
            <person name="Sugawara M."/>
            <person name="Takahashi M."/>
            <person name="Kanda K."/>
            <person name="Yokoi T."/>
            <person name="Furuya T."/>
            <person name="Kikkawa E."/>
            <person name="Omura Y."/>
            <person name="Abe K."/>
            <person name="Kamihara K."/>
            <person name="Katsuta N."/>
            <person name="Sato K."/>
            <person name="Tanikawa M."/>
            <person name="Yamazaki M."/>
            <person name="Ninomiya K."/>
            <person name="Ishibashi T."/>
            <person name="Yamashita H."/>
            <person name="Murakawa K."/>
            <person name="Fujimori K."/>
            <person name="Tanai H."/>
            <person name="Kimata M."/>
            <person name="Watanabe M."/>
            <person name="Hiraoka S."/>
            <person name="Chiba Y."/>
            <person name="Ishida S."/>
            <person name="Ono Y."/>
            <person name="Takiguchi S."/>
            <person name="Watanabe S."/>
            <person name="Yosida M."/>
            <person name="Hotuta T."/>
            <person name="Kusano J."/>
            <person name="Kanehori K."/>
            <person name="Takahashi-Fujii A."/>
            <person name="Hara H."/>
            <person name="Tanase T.-O."/>
            <person name="Nomura Y."/>
            <person name="Togiya S."/>
            <person name="Komai F."/>
            <person name="Hara R."/>
            <person name="Takeuchi K."/>
            <person name="Arita M."/>
            <person name="Imose N."/>
            <person name="Musashino K."/>
            <person name="Yuuki H."/>
            <person name="Oshima A."/>
            <person name="Sasaki N."/>
            <person name="Aotsuka S."/>
            <person name="Yoshikawa Y."/>
            <person name="Matsunawa H."/>
            <person name="Ichihara T."/>
            <person name="Shiohata N."/>
            <person name="Sano S."/>
            <person name="Moriya S."/>
            <person name="Momiyama H."/>
            <person name="Satoh N."/>
            <person name="Takami S."/>
            <person name="Terashima Y."/>
            <person name="Suzuki O."/>
            <person name="Nakagawa S."/>
            <person name="Senoh A."/>
            <person name="Mizoguchi H."/>
            <person name="Goto Y."/>
            <person name="Shimizu F."/>
            <person name="Wakebe H."/>
            <person name="Hishigaki H."/>
            <person name="Watanabe T."/>
            <person name="Sugiyama A."/>
            <person name="Takemoto M."/>
            <person name="Kawakami B."/>
            <person name="Yamazaki M."/>
            <person name="Watanabe K."/>
            <person name="Kumagai A."/>
            <person name="Itakura S."/>
            <person name="Fukuzumi Y."/>
            <person name="Fujimori Y."/>
            <person name="Komiyama M."/>
            <person name="Tashiro H."/>
            <person name="Tanigami A."/>
            <person name="Fujiwara T."/>
            <person name="Ono T."/>
            <person name="Yamada K."/>
            <person name="Fujii Y."/>
            <person name="Ozaki K."/>
            <person name="Hirao M."/>
            <person name="Ohmori Y."/>
            <person name="Kawabata A."/>
            <person name="Hikiji T."/>
            <person name="Kobatake N."/>
            <person name="Inagaki H."/>
            <person name="Ikema Y."/>
            <person name="Okamoto S."/>
            <person name="Okitani R."/>
            <person name="Kawakami T."/>
            <person name="Noguchi S."/>
            <person name="Itoh T."/>
            <person name="Shigeta K."/>
            <person name="Senba T."/>
            <person name="Matsumura K."/>
            <person name="Nakajima Y."/>
            <person name="Mizuno T."/>
            <person name="Morinaga M."/>
            <person name="Sasaki M."/>
            <person name="Togashi T."/>
            <person name="Oyama M."/>
            <person name="Hata H."/>
            <person name="Watanabe M."/>
            <person name="Komatsu T."/>
            <person name="Mizushima-Sugano J."/>
            <person name="Satoh T."/>
            <person name="Shirai Y."/>
            <person name="Takahashi Y."/>
            <person name="Nakagawa K."/>
            <person name="Okumura K."/>
            <person name="Nagase T."/>
            <person name="Nomura N."/>
            <person name="Kikuchi H."/>
            <person name="Masuho Y."/>
            <person name="Yamashita R."/>
            <person name="Nakai K."/>
            <person name="Yada T."/>
            <person name="Nakamura Y."/>
            <person name="Ohara O."/>
            <person name="Isogai T."/>
            <person name="Sugano S."/>
        </authorList>
    </citation>
    <scope>NUCLEOTIDE SEQUENCE [LARGE SCALE MRNA]</scope>
    <source>
        <tissue>Embryo</tissue>
        <tissue>Placenta</tissue>
    </source>
</reference>
<reference key="4">
    <citation type="journal article" date="2004" name="Nature">
        <title>DNA sequence and analysis of human chromosome 9.</title>
        <authorList>
            <person name="Humphray S.J."/>
            <person name="Oliver K."/>
            <person name="Hunt A.R."/>
            <person name="Plumb R.W."/>
            <person name="Loveland J.E."/>
            <person name="Howe K.L."/>
            <person name="Andrews T.D."/>
            <person name="Searle S."/>
            <person name="Hunt S.E."/>
            <person name="Scott C.E."/>
            <person name="Jones M.C."/>
            <person name="Ainscough R."/>
            <person name="Almeida J.P."/>
            <person name="Ambrose K.D."/>
            <person name="Ashwell R.I.S."/>
            <person name="Babbage A.K."/>
            <person name="Babbage S."/>
            <person name="Bagguley C.L."/>
            <person name="Bailey J."/>
            <person name="Banerjee R."/>
            <person name="Barker D.J."/>
            <person name="Barlow K.F."/>
            <person name="Bates K."/>
            <person name="Beasley H."/>
            <person name="Beasley O."/>
            <person name="Bird C.P."/>
            <person name="Bray-Allen S."/>
            <person name="Brown A.J."/>
            <person name="Brown J.Y."/>
            <person name="Burford D."/>
            <person name="Burrill W."/>
            <person name="Burton J."/>
            <person name="Carder C."/>
            <person name="Carter N.P."/>
            <person name="Chapman J.C."/>
            <person name="Chen Y."/>
            <person name="Clarke G."/>
            <person name="Clark S.Y."/>
            <person name="Clee C.M."/>
            <person name="Clegg S."/>
            <person name="Collier R.E."/>
            <person name="Corby N."/>
            <person name="Crosier M."/>
            <person name="Cummings A.T."/>
            <person name="Davies J."/>
            <person name="Dhami P."/>
            <person name="Dunn M."/>
            <person name="Dutta I."/>
            <person name="Dyer L.W."/>
            <person name="Earthrowl M.E."/>
            <person name="Faulkner L."/>
            <person name="Fleming C.J."/>
            <person name="Frankish A."/>
            <person name="Frankland J.A."/>
            <person name="French L."/>
            <person name="Fricker D.G."/>
            <person name="Garner P."/>
            <person name="Garnett J."/>
            <person name="Ghori J."/>
            <person name="Gilbert J.G.R."/>
            <person name="Glison C."/>
            <person name="Grafham D.V."/>
            <person name="Gribble S."/>
            <person name="Griffiths C."/>
            <person name="Griffiths-Jones S."/>
            <person name="Grocock R."/>
            <person name="Guy J."/>
            <person name="Hall R.E."/>
            <person name="Hammond S."/>
            <person name="Harley J.L."/>
            <person name="Harrison E.S.I."/>
            <person name="Hart E.A."/>
            <person name="Heath P.D."/>
            <person name="Henderson C.D."/>
            <person name="Hopkins B.L."/>
            <person name="Howard P.J."/>
            <person name="Howden P.J."/>
            <person name="Huckle E."/>
            <person name="Johnson C."/>
            <person name="Johnson D."/>
            <person name="Joy A.A."/>
            <person name="Kay M."/>
            <person name="Keenan S."/>
            <person name="Kershaw J.K."/>
            <person name="Kimberley A.M."/>
            <person name="King A."/>
            <person name="Knights A."/>
            <person name="Laird G.K."/>
            <person name="Langford C."/>
            <person name="Lawlor S."/>
            <person name="Leongamornlert D.A."/>
            <person name="Leversha M."/>
            <person name="Lloyd C."/>
            <person name="Lloyd D.M."/>
            <person name="Lovell J."/>
            <person name="Martin S."/>
            <person name="Mashreghi-Mohammadi M."/>
            <person name="Matthews L."/>
            <person name="McLaren S."/>
            <person name="McLay K.E."/>
            <person name="McMurray A."/>
            <person name="Milne S."/>
            <person name="Nickerson T."/>
            <person name="Nisbett J."/>
            <person name="Nordsiek G."/>
            <person name="Pearce A.V."/>
            <person name="Peck A.I."/>
            <person name="Porter K.M."/>
            <person name="Pandian R."/>
            <person name="Pelan S."/>
            <person name="Phillimore B."/>
            <person name="Povey S."/>
            <person name="Ramsey Y."/>
            <person name="Rand V."/>
            <person name="Scharfe M."/>
            <person name="Sehra H.K."/>
            <person name="Shownkeen R."/>
            <person name="Sims S.K."/>
            <person name="Skuce C.D."/>
            <person name="Smith M."/>
            <person name="Steward C.A."/>
            <person name="Swarbreck D."/>
            <person name="Sycamore N."/>
            <person name="Tester J."/>
            <person name="Thorpe A."/>
            <person name="Tracey A."/>
            <person name="Tromans A."/>
            <person name="Thomas D.W."/>
            <person name="Wall M."/>
            <person name="Wallis J.M."/>
            <person name="West A.P."/>
            <person name="Whitehead S.L."/>
            <person name="Willey D.L."/>
            <person name="Williams S.A."/>
            <person name="Wilming L."/>
            <person name="Wray P.W."/>
            <person name="Young L."/>
            <person name="Ashurst J.L."/>
            <person name="Coulson A."/>
            <person name="Blocker H."/>
            <person name="Durbin R.M."/>
            <person name="Sulston J.E."/>
            <person name="Hubbard T."/>
            <person name="Jackson M.J."/>
            <person name="Bentley D.R."/>
            <person name="Beck S."/>
            <person name="Rogers J."/>
            <person name="Dunham I."/>
        </authorList>
    </citation>
    <scope>NUCLEOTIDE SEQUENCE [LARGE SCALE GENOMIC DNA]</scope>
</reference>
<reference key="5">
    <citation type="journal article" date="2004" name="Genome Res.">
        <title>The status, quality, and expansion of the NIH full-length cDNA project: the Mammalian Gene Collection (MGC).</title>
        <authorList>
            <consortium name="The MGC Project Team"/>
        </authorList>
    </citation>
    <scope>NUCLEOTIDE SEQUENCE [LARGE SCALE MRNA] OF 1-90</scope>
    <source>
        <tissue>Prostate</tissue>
    </source>
</reference>
<reference key="6">
    <citation type="journal article" date="2014" name="Nat. Commun.">
        <title>Global profiling of co- and post-translationally N-myristoylated proteomes in human cells.</title>
        <authorList>
            <person name="Thinon E."/>
            <person name="Serwa R.A."/>
            <person name="Broncel M."/>
            <person name="Brannigan J.A."/>
            <person name="Brassat U."/>
            <person name="Wright M.H."/>
            <person name="Heal W.P."/>
            <person name="Wilkinson A.J."/>
            <person name="Mann D.J."/>
            <person name="Tate E.W."/>
        </authorList>
    </citation>
    <scope>MYRISTOYLATION AT GLY-2</scope>
    <scope>CLEAVAGE OF INITIATOR METHIONINE</scope>
    <scope>IDENTIFICATION BY MASS SPECTROMETRY</scope>
</reference>
<reference key="7">
    <citation type="journal article" date="2015" name="Proteomics">
        <title>N-terminome analysis of the human mitochondrial proteome.</title>
        <authorList>
            <person name="Vaca Jacome A.S."/>
            <person name="Rabilloud T."/>
            <person name="Schaeffer-Reiss C."/>
            <person name="Rompais M."/>
            <person name="Ayoub D."/>
            <person name="Lane L."/>
            <person name="Bairoch A."/>
            <person name="Van Dorsselaer A."/>
            <person name="Carapito C."/>
        </authorList>
    </citation>
    <scope>IDENTIFICATION BY MASS SPECTROMETRY [LARGE SCALE ANALYSIS]</scope>
</reference>
<reference key="8">
    <citation type="journal article" date="2004" name="J. Mol. Biol.">
        <title>Structural analysis of the human Golgi-associated plant pathogenesis related protein GAPR-1 implicates dimerization as a regulatory mechanism.</title>
        <authorList>
            <person name="Serrano R.L."/>
            <person name="Kuhn A."/>
            <person name="Hendricks A."/>
            <person name="Helms J.B."/>
            <person name="Sinning I."/>
            <person name="Groves M.R."/>
        </authorList>
    </citation>
    <scope>X-RAY CRYSTALLOGRAPHY (1.55 ANGSTROMS)</scope>
    <scope>HOMODIMERIZATION</scope>
</reference>
<evidence type="ECO:0000255" key="1"/>
<evidence type="ECO:0000256" key="2">
    <source>
        <dbReference type="SAM" id="MobiDB-lite"/>
    </source>
</evidence>
<evidence type="ECO:0000269" key="3">
    <source>
    </source>
</evidence>
<evidence type="ECO:0000269" key="4">
    <source>
    </source>
</evidence>
<evidence type="ECO:0000269" key="5">
    <source>
    </source>
</evidence>
<evidence type="ECO:0000305" key="6"/>
<evidence type="ECO:0007829" key="7">
    <source>
        <dbReference type="PDB" id="5VHG"/>
    </source>
</evidence>
<accession>Q9H4G4</accession>
<accession>Q5VZR1</accession>
<accession>Q8N2S6</accession>
<accession>Q8WWC9</accession>
<accession>Q8WX36</accession>
<sequence length="154" mass="17218">MGKSASKQFHNEVLKAHNEYRQKHGVPPLKLCKNLNREAQQYSEALASTRILKHSPESSRGQCGENLAWASYDQTGKEVADRWYSEIKNYNFQQPGFTSGTGHFTAMVWKNTKKMGVGKASASDGSSFVVARYFPAGNVVNEGFFEENVLPPKK</sequence>
<name>GAPR1_HUMAN</name>
<protein>
    <recommendedName>
        <fullName>Golgi-associated plant pathogenesis-related protein 1</fullName>
        <shortName>GAPR-1</shortName>
        <shortName>Golgi-associated PR-1 protein</shortName>
    </recommendedName>
    <alternativeName>
        <fullName>Glioma pathogenesis-related protein 2</fullName>
        <shortName>GliPR 2</shortName>
    </alternativeName>
</protein>
<keyword id="KW-0002">3D-structure</keyword>
<keyword id="KW-0175">Coiled coil</keyword>
<keyword id="KW-0903">Direct protein sequencing</keyword>
<keyword id="KW-0333">Golgi apparatus</keyword>
<keyword id="KW-0449">Lipoprotein</keyword>
<keyword id="KW-0472">Membrane</keyword>
<keyword id="KW-0519">Myristate</keyword>
<keyword id="KW-1267">Proteomics identification</keyword>
<keyword id="KW-1185">Reference proteome</keyword>